<name>NRFA_ECOBW</name>
<accession>C5A163</accession>
<gene>
    <name evidence="1" type="primary">nrfA</name>
    <name type="ordered locus">BWG_3784</name>
</gene>
<organism>
    <name type="scientific">Escherichia coli (strain K12 / MC4100 / BW2952)</name>
    <dbReference type="NCBI Taxonomy" id="595496"/>
    <lineage>
        <taxon>Bacteria</taxon>
        <taxon>Pseudomonadati</taxon>
        <taxon>Pseudomonadota</taxon>
        <taxon>Gammaproteobacteria</taxon>
        <taxon>Enterobacterales</taxon>
        <taxon>Enterobacteriaceae</taxon>
        <taxon>Escherichia</taxon>
    </lineage>
</organism>
<feature type="signal peptide" evidence="1">
    <location>
        <begin position="1"/>
        <end position="26"/>
    </location>
</feature>
<feature type="chain" id="PRO_1000213761" description="Cytochrome c-552">
    <location>
        <begin position="27"/>
        <end position="478"/>
    </location>
</feature>
<feature type="binding site" description="axial binding residue" evidence="1">
    <location>
        <position position="94"/>
    </location>
    <ligand>
        <name>heme c</name>
        <dbReference type="ChEBI" id="CHEBI:61717"/>
        <label>3</label>
    </ligand>
    <ligandPart>
        <name>Fe</name>
        <dbReference type="ChEBI" id="CHEBI:18248"/>
    </ligandPart>
</feature>
<feature type="binding site" description="covalent" evidence="1">
    <location>
        <position position="122"/>
    </location>
    <ligand>
        <name>heme</name>
        <dbReference type="ChEBI" id="CHEBI:30413"/>
        <label>1</label>
    </ligand>
</feature>
<feature type="binding site" description="covalent" evidence="1">
    <location>
        <position position="125"/>
    </location>
    <ligand>
        <name>heme</name>
        <dbReference type="ChEBI" id="CHEBI:30413"/>
        <label>1</label>
    </ligand>
</feature>
<feature type="binding site" description="axial binding residue" evidence="1">
    <location>
        <position position="126"/>
    </location>
    <ligand>
        <name>heme</name>
        <dbReference type="ChEBI" id="CHEBI:30413"/>
        <label>1</label>
    </ligand>
    <ligandPart>
        <name>Fe</name>
        <dbReference type="ChEBI" id="CHEBI:18248"/>
    </ligandPart>
</feature>
<feature type="binding site" description="covalent" evidence="1">
    <location>
        <position position="160"/>
    </location>
    <ligand>
        <name>heme c</name>
        <dbReference type="ChEBI" id="CHEBI:61717"/>
        <label>2</label>
    </ligand>
</feature>
<feature type="binding site" description="covalent" evidence="1">
    <location>
        <position position="163"/>
    </location>
    <ligand>
        <name>heme c</name>
        <dbReference type="ChEBI" id="CHEBI:61717"/>
        <label>2</label>
    </ligand>
</feature>
<feature type="binding site" description="axial binding residue" evidence="1">
    <location>
        <position position="164"/>
    </location>
    <ligand>
        <name>heme c</name>
        <dbReference type="ChEBI" id="CHEBI:61717"/>
        <label>2</label>
    </ligand>
    <ligandPart>
        <name>Fe</name>
        <dbReference type="ChEBI" id="CHEBI:18248"/>
    </ligandPart>
</feature>
<feature type="binding site" description="covalent" evidence="1">
    <location>
        <position position="209"/>
    </location>
    <ligand>
        <name>heme c</name>
        <dbReference type="ChEBI" id="CHEBI:61717"/>
        <label>3</label>
    </ligand>
</feature>
<feature type="binding site" description="covalent" evidence="1">
    <location>
        <position position="212"/>
    </location>
    <ligand>
        <name>heme c</name>
        <dbReference type="ChEBI" id="CHEBI:61717"/>
        <label>3</label>
    </ligand>
</feature>
<feature type="binding site" description="axial binding residue" evidence="1">
    <location>
        <position position="213"/>
    </location>
    <ligand>
        <name>heme c</name>
        <dbReference type="ChEBI" id="CHEBI:61717"/>
        <label>3</label>
    </ligand>
    <ligandPart>
        <name>Fe</name>
        <dbReference type="ChEBI" id="CHEBI:18248"/>
    </ligandPart>
</feature>
<feature type="binding site" evidence="1">
    <location>
        <position position="215"/>
    </location>
    <ligand>
        <name>Ca(2+)</name>
        <dbReference type="ChEBI" id="CHEBI:29108"/>
    </ligand>
</feature>
<feature type="binding site" evidence="1">
    <location>
        <position position="216"/>
    </location>
    <ligand>
        <name>Ca(2+)</name>
        <dbReference type="ChEBI" id="CHEBI:29108"/>
    </ligand>
</feature>
<feature type="binding site" evidence="1">
    <location>
        <position position="216"/>
    </location>
    <ligand>
        <name>substrate</name>
    </ligand>
</feature>
<feature type="binding site" evidence="1">
    <location>
        <position position="261"/>
    </location>
    <ligand>
        <name>Ca(2+)</name>
        <dbReference type="ChEBI" id="CHEBI:29108"/>
    </ligand>
</feature>
<feature type="binding site" evidence="1">
    <location>
        <position position="263"/>
    </location>
    <ligand>
        <name>Ca(2+)</name>
        <dbReference type="ChEBI" id="CHEBI:29108"/>
    </ligand>
</feature>
<feature type="binding site" evidence="1">
    <location>
        <position position="264"/>
    </location>
    <ligand>
        <name>substrate</name>
    </ligand>
</feature>
<feature type="binding site" description="axial binding residue" evidence="1">
    <location>
        <position position="275"/>
    </location>
    <ligand>
        <name>heme c</name>
        <dbReference type="ChEBI" id="CHEBI:61717"/>
        <label>5</label>
    </ligand>
    <ligandPart>
        <name>Fe</name>
        <dbReference type="ChEBI" id="CHEBI:18248"/>
    </ligandPart>
</feature>
<feature type="binding site" description="covalent" evidence="1">
    <location>
        <position position="282"/>
    </location>
    <ligand>
        <name>heme c</name>
        <dbReference type="ChEBI" id="CHEBI:61717"/>
        <label>4</label>
    </ligand>
</feature>
<feature type="binding site" description="covalent" evidence="1">
    <location>
        <position position="285"/>
    </location>
    <ligand>
        <name>heme c</name>
        <dbReference type="ChEBI" id="CHEBI:61717"/>
        <label>4</label>
    </ligand>
</feature>
<feature type="binding site" description="axial binding residue" evidence="1">
    <location>
        <position position="286"/>
    </location>
    <ligand>
        <name>heme c</name>
        <dbReference type="ChEBI" id="CHEBI:61717"/>
        <label>4</label>
    </ligand>
    <ligandPart>
        <name>Fe</name>
        <dbReference type="ChEBI" id="CHEBI:18248"/>
    </ligandPart>
</feature>
<feature type="binding site" description="axial binding residue" evidence="1">
    <location>
        <position position="301"/>
    </location>
    <ligand>
        <name>heme c</name>
        <dbReference type="ChEBI" id="CHEBI:61717"/>
        <label>2</label>
    </ligand>
    <ligandPart>
        <name>Fe</name>
        <dbReference type="ChEBI" id="CHEBI:18248"/>
    </ligandPart>
</feature>
<feature type="binding site" description="covalent" evidence="1">
    <location>
        <position position="314"/>
    </location>
    <ligand>
        <name>heme c</name>
        <dbReference type="ChEBI" id="CHEBI:61717"/>
        <label>5</label>
    </ligand>
</feature>
<feature type="binding site" description="covalent" evidence="1">
    <location>
        <position position="317"/>
    </location>
    <ligand>
        <name>heme c</name>
        <dbReference type="ChEBI" id="CHEBI:61717"/>
        <label>5</label>
    </ligand>
</feature>
<feature type="binding site" description="axial binding residue" evidence="1">
    <location>
        <position position="318"/>
    </location>
    <ligand>
        <name>heme c</name>
        <dbReference type="ChEBI" id="CHEBI:61717"/>
        <label>5</label>
    </ligand>
    <ligandPart>
        <name>Fe</name>
        <dbReference type="ChEBI" id="CHEBI:18248"/>
    </ligandPart>
</feature>
<feature type="binding site" description="axial binding residue" evidence="1">
    <location>
        <position position="393"/>
    </location>
    <ligand>
        <name>heme c</name>
        <dbReference type="ChEBI" id="CHEBI:61717"/>
        <label>4</label>
    </ligand>
    <ligandPart>
        <name>Fe</name>
        <dbReference type="ChEBI" id="CHEBI:18248"/>
    </ligandPart>
</feature>
<evidence type="ECO:0000255" key="1">
    <source>
        <dbReference type="HAMAP-Rule" id="MF_01182"/>
    </source>
</evidence>
<dbReference type="EC" id="1.7.2.2" evidence="1"/>
<dbReference type="EMBL" id="CP001396">
    <property type="protein sequence ID" value="ACR63908.1"/>
    <property type="molecule type" value="Genomic_DNA"/>
</dbReference>
<dbReference type="RefSeq" id="WP_000196875.1">
    <property type="nucleotide sequence ID" value="NC_012759.1"/>
</dbReference>
<dbReference type="SMR" id="C5A163"/>
<dbReference type="GeneID" id="93777759"/>
<dbReference type="KEGG" id="ebw:BWG_3784"/>
<dbReference type="HOGENOM" id="CLU_035040_1_0_6"/>
<dbReference type="UniPathway" id="UPA00653"/>
<dbReference type="GO" id="GO:0030288">
    <property type="term" value="C:outer membrane-bounded periplasmic space"/>
    <property type="evidence" value="ECO:0007669"/>
    <property type="project" value="TreeGrafter"/>
</dbReference>
<dbReference type="GO" id="GO:0005509">
    <property type="term" value="F:calcium ion binding"/>
    <property type="evidence" value="ECO:0007669"/>
    <property type="project" value="UniProtKB-UniRule"/>
</dbReference>
<dbReference type="GO" id="GO:0020037">
    <property type="term" value="F:heme binding"/>
    <property type="evidence" value="ECO:0007669"/>
    <property type="project" value="InterPro"/>
</dbReference>
<dbReference type="GO" id="GO:0005506">
    <property type="term" value="F:iron ion binding"/>
    <property type="evidence" value="ECO:0007669"/>
    <property type="project" value="UniProtKB-UniRule"/>
</dbReference>
<dbReference type="GO" id="GO:0042279">
    <property type="term" value="F:nitrite reductase (cytochrome, ammonia-forming) activity"/>
    <property type="evidence" value="ECO:0007669"/>
    <property type="project" value="UniProtKB-UniRule"/>
</dbReference>
<dbReference type="GO" id="GO:0019645">
    <property type="term" value="P:anaerobic electron transport chain"/>
    <property type="evidence" value="ECO:0007669"/>
    <property type="project" value="TreeGrafter"/>
</dbReference>
<dbReference type="GO" id="GO:0042128">
    <property type="term" value="P:nitrate assimilation"/>
    <property type="evidence" value="ECO:0007669"/>
    <property type="project" value="UniProtKB-UniRule"/>
</dbReference>
<dbReference type="CDD" id="cd00548">
    <property type="entry name" value="NrfA-like"/>
    <property type="match status" value="1"/>
</dbReference>
<dbReference type="FunFam" id="1.10.1130.10:FF:000002">
    <property type="entry name" value="Cytochrome c-552"/>
    <property type="match status" value="1"/>
</dbReference>
<dbReference type="FunFam" id="1.20.140.10:FF:000014">
    <property type="entry name" value="Cytochrome c-552"/>
    <property type="match status" value="1"/>
</dbReference>
<dbReference type="Gene3D" id="1.20.140.10">
    <property type="entry name" value="Butyryl-CoA Dehydrogenase, subunit A, domain 3"/>
    <property type="match status" value="1"/>
</dbReference>
<dbReference type="Gene3D" id="1.10.1130.10">
    <property type="entry name" value="Flavocytochrome C3, Chain A"/>
    <property type="match status" value="1"/>
</dbReference>
<dbReference type="HAMAP" id="MF_01182">
    <property type="entry name" value="Cytochrom_C552"/>
    <property type="match status" value="1"/>
</dbReference>
<dbReference type="InterPro" id="IPR003321">
    <property type="entry name" value="Cyt_c552"/>
</dbReference>
<dbReference type="InterPro" id="IPR017570">
    <property type="entry name" value="Cyt_c_NO2Rdtase_formate-dep"/>
</dbReference>
<dbReference type="InterPro" id="IPR036280">
    <property type="entry name" value="Multihaem_cyt_sf"/>
</dbReference>
<dbReference type="NCBIfam" id="TIGR03152">
    <property type="entry name" value="cyto_c552_HCOOH"/>
    <property type="match status" value="1"/>
</dbReference>
<dbReference type="NCBIfam" id="NF008339">
    <property type="entry name" value="PRK11125.1"/>
    <property type="match status" value="1"/>
</dbReference>
<dbReference type="PANTHER" id="PTHR30633:SF0">
    <property type="entry name" value="CYTOCHROME C-552"/>
    <property type="match status" value="1"/>
</dbReference>
<dbReference type="PANTHER" id="PTHR30633">
    <property type="entry name" value="CYTOCHROME C-552 RESPIRATORY NITRITE REDUCTASE"/>
    <property type="match status" value="1"/>
</dbReference>
<dbReference type="Pfam" id="PF02335">
    <property type="entry name" value="Cytochrom_C552"/>
    <property type="match status" value="1"/>
</dbReference>
<dbReference type="PIRSF" id="PIRSF000243">
    <property type="entry name" value="Cyt_c552"/>
    <property type="match status" value="1"/>
</dbReference>
<dbReference type="SUPFAM" id="SSF48695">
    <property type="entry name" value="Multiheme cytochromes"/>
    <property type="match status" value="1"/>
</dbReference>
<dbReference type="PROSITE" id="PS51008">
    <property type="entry name" value="MULTIHEME_CYTC"/>
    <property type="match status" value="1"/>
</dbReference>
<comment type="function">
    <text evidence="1">Catalyzes the reduction of nitrite to ammonia, consuming six electrons in the process.</text>
</comment>
<comment type="catalytic activity">
    <reaction evidence="1">
        <text>6 Fe(III)-[cytochrome c] + NH4(+) + 2 H2O = 6 Fe(II)-[cytochrome c] + nitrite + 8 H(+)</text>
        <dbReference type="Rhea" id="RHEA:13089"/>
        <dbReference type="Rhea" id="RHEA-COMP:10350"/>
        <dbReference type="Rhea" id="RHEA-COMP:14399"/>
        <dbReference type="ChEBI" id="CHEBI:15377"/>
        <dbReference type="ChEBI" id="CHEBI:15378"/>
        <dbReference type="ChEBI" id="CHEBI:16301"/>
        <dbReference type="ChEBI" id="CHEBI:28938"/>
        <dbReference type="ChEBI" id="CHEBI:29033"/>
        <dbReference type="ChEBI" id="CHEBI:29034"/>
        <dbReference type="EC" id="1.7.2.2"/>
    </reaction>
</comment>
<comment type="cofactor">
    <cofactor evidence="1">
        <name>Ca(2+)</name>
        <dbReference type="ChEBI" id="CHEBI:29108"/>
    </cofactor>
    <text evidence="1">Binds 1 Ca(2+) ion per monomer.</text>
</comment>
<comment type="cofactor">
    <cofactor evidence="1">
        <name>heme c</name>
        <dbReference type="ChEBI" id="CHEBI:61717"/>
    </cofactor>
    <text evidence="1">Binds 5 heme c groups covalently per monomer.</text>
</comment>
<comment type="pathway">
    <text evidence="1">Nitrogen metabolism; nitrate reduction (assimilation).</text>
</comment>
<comment type="subcellular location">
    <subcellularLocation>
        <location evidence="1">Periplasm</location>
    </subcellularLocation>
</comment>
<comment type="similarity">
    <text evidence="1">Belongs to the cytochrome c-552 family.</text>
</comment>
<proteinExistence type="inferred from homology"/>
<keyword id="KW-0106">Calcium</keyword>
<keyword id="KW-0249">Electron transport</keyword>
<keyword id="KW-0349">Heme</keyword>
<keyword id="KW-0408">Iron</keyword>
<keyword id="KW-0479">Metal-binding</keyword>
<keyword id="KW-0560">Oxidoreductase</keyword>
<keyword id="KW-0574">Periplasm</keyword>
<keyword id="KW-0732">Signal</keyword>
<keyword id="KW-0813">Transport</keyword>
<protein>
    <recommendedName>
        <fullName evidence="1">Cytochrome c-552</fullName>
        <ecNumber evidence="1">1.7.2.2</ecNumber>
    </recommendedName>
    <alternativeName>
        <fullName evidence="1">Ammonia-forming cytochrome c nitrite reductase</fullName>
        <shortName evidence="1">Cytochrome c nitrite reductase</shortName>
    </alternativeName>
</protein>
<reference key="1">
    <citation type="journal article" date="2009" name="J. Bacteriol.">
        <title>Genomic sequencing reveals regulatory mutations and recombinational events in the widely used MC4100 lineage of Escherichia coli K-12.</title>
        <authorList>
            <person name="Ferenci T."/>
            <person name="Zhou Z."/>
            <person name="Betteridge T."/>
            <person name="Ren Y."/>
            <person name="Liu Y."/>
            <person name="Feng L."/>
            <person name="Reeves P.R."/>
            <person name="Wang L."/>
        </authorList>
    </citation>
    <scope>NUCLEOTIDE SEQUENCE [LARGE SCALE GENOMIC DNA]</scope>
    <source>
        <strain>K12 / MC4100 / BW2952</strain>
    </source>
</reference>
<sequence>MTRIKINARRIFSLLIPFFFFTSVHAEQTAAPAKPVTVEAKNETFAPQHPDQYLSWKATSEQSERVDALAEDPRLVILWAGYPFSRDYNKPRGHAFAVTDVRETLRTGAPKNAEDGPLPMACWSCKSPDVARLIQKDGEDGYFHGKWARGGPEIVNNLGCADCHNTASPEFAKGKPELTLSRPYAARAMEAIGKPFEKAGRFDQQSMVCGQCHVEYYFDGKNKAVKFPWDDGMKVENMEQYYDKIAFSDWTNSLSKTPMLKAQHPEYETWTAGIHGKNNVTCIDCHMPKVQNAEGKLYTDHKIGNPFDNFAQTCANCHTQDKAALQKVVAERKQSINDLKIKVEDQLVHAHFEAKAALDAGATEAEMKPIQDDIRHAQWRWDLAIASHGIHMHAPEEGLRMLGTAMDKAADARTKLARLLATKGITHEIQIPDISTKEKAQQAIGLNMEQIKAEKQDFIKTVIPQWEEQARKNGLLSQ</sequence>